<keyword id="KW-0997">Cell inner membrane</keyword>
<keyword id="KW-1003">Cell membrane</keyword>
<keyword id="KW-0448">Lipopolysaccharide biosynthesis</keyword>
<keyword id="KW-0472">Membrane</keyword>
<keyword id="KW-0735">Signal-anchor</keyword>
<keyword id="KW-0808">Transferase</keyword>
<keyword id="KW-0812">Transmembrane</keyword>
<keyword id="KW-1133">Transmembrane helix</keyword>
<evidence type="ECO:0000250" key="1"/>
<evidence type="ECO:0000255" key="2"/>
<evidence type="ECO:0000305" key="3"/>
<feature type="chain" id="PRO_0000286457" description="3-deoxy-D-manno-octulosonic acid transferase">
    <location>
        <begin position="1"/>
        <end position="462"/>
    </location>
</feature>
<feature type="transmembrane region" description="Helical; Signal-anchor" evidence="2">
    <location>
        <begin position="2"/>
        <end position="22"/>
    </location>
</feature>
<feature type="domain" description="RPE1 insert">
    <location>
        <begin position="47"/>
        <end position="90"/>
    </location>
</feature>
<feature type="active site" description="Proton acceptor" evidence="1">
    <location>
        <position position="104"/>
    </location>
</feature>
<feature type="binding site" evidence="1">
    <location>
        <begin position="308"/>
        <end position="309"/>
    </location>
    <ligand>
        <name>CMP</name>
        <dbReference type="ChEBI" id="CHEBI:60377"/>
    </ligand>
</feature>
<feature type="binding site" evidence="1">
    <location>
        <begin position="349"/>
        <end position="351"/>
    </location>
    <ligand>
        <name>CMP</name>
        <dbReference type="ChEBI" id="CHEBI:60377"/>
    </ligand>
</feature>
<feature type="binding site" evidence="1">
    <location>
        <begin position="374"/>
        <end position="377"/>
    </location>
    <ligand>
        <name>CMP</name>
        <dbReference type="ChEBI" id="CHEBI:60377"/>
    </ligand>
</feature>
<feature type="site" description="Transition state stabilizer" evidence="1">
    <location>
        <position position="174"/>
    </location>
</feature>
<feature type="site" description="Transition state stabilizer" evidence="1">
    <location>
        <position position="249"/>
    </location>
</feature>
<dbReference type="EC" id="2.4.99.12"/>
<dbReference type="EMBL" id="AE017197">
    <property type="protein sequence ID" value="AAU03535.1"/>
    <property type="molecule type" value="Genomic_DNA"/>
</dbReference>
<dbReference type="RefSeq" id="WP_011190522.1">
    <property type="nucleotide sequence ID" value="NC_006142.1"/>
</dbReference>
<dbReference type="SMR" id="Q68XV7"/>
<dbReference type="CAZy" id="GT30">
    <property type="family name" value="Glycosyltransferase Family 30"/>
</dbReference>
<dbReference type="KEGG" id="rty:RT0048"/>
<dbReference type="eggNOG" id="COG1519">
    <property type="taxonomic scope" value="Bacteria"/>
</dbReference>
<dbReference type="HOGENOM" id="CLU_036146_2_0_5"/>
<dbReference type="OrthoDB" id="9789797at2"/>
<dbReference type="UniPathway" id="UPA00958"/>
<dbReference type="Proteomes" id="UP000000604">
    <property type="component" value="Chromosome"/>
</dbReference>
<dbReference type="GO" id="GO:0005886">
    <property type="term" value="C:plasma membrane"/>
    <property type="evidence" value="ECO:0007669"/>
    <property type="project" value="UniProtKB-SubCell"/>
</dbReference>
<dbReference type="GO" id="GO:0043842">
    <property type="term" value="F:Kdo transferase activity"/>
    <property type="evidence" value="ECO:0007669"/>
    <property type="project" value="UniProtKB-EC"/>
</dbReference>
<dbReference type="GO" id="GO:0009245">
    <property type="term" value="P:lipid A biosynthetic process"/>
    <property type="evidence" value="ECO:0007669"/>
    <property type="project" value="TreeGrafter"/>
</dbReference>
<dbReference type="GO" id="GO:0009244">
    <property type="term" value="P:lipopolysaccharide core region biosynthetic process"/>
    <property type="evidence" value="ECO:0007669"/>
    <property type="project" value="UniProtKB-UniPathway"/>
</dbReference>
<dbReference type="Gene3D" id="3.40.50.11720">
    <property type="entry name" value="3-Deoxy-D-manno-octulosonic-acid transferase, N-terminal domain"/>
    <property type="match status" value="1"/>
</dbReference>
<dbReference type="Gene3D" id="3.40.50.2000">
    <property type="entry name" value="Glycogen Phosphorylase B"/>
    <property type="match status" value="1"/>
</dbReference>
<dbReference type="InterPro" id="IPR007507">
    <property type="entry name" value="Glycos_transf_N"/>
</dbReference>
<dbReference type="InterPro" id="IPR038107">
    <property type="entry name" value="Glycos_transf_N_sf"/>
</dbReference>
<dbReference type="InterPro" id="IPR039901">
    <property type="entry name" value="Kdotransferase"/>
</dbReference>
<dbReference type="NCBIfam" id="NF004389">
    <property type="entry name" value="PRK05749.1-5"/>
    <property type="match status" value="1"/>
</dbReference>
<dbReference type="PANTHER" id="PTHR42755:SF1">
    <property type="entry name" value="3-DEOXY-D-MANNO-OCTULOSONIC ACID TRANSFERASE, MITOCHONDRIAL-RELATED"/>
    <property type="match status" value="1"/>
</dbReference>
<dbReference type="PANTHER" id="PTHR42755">
    <property type="entry name" value="3-DEOXY-MANNO-OCTULOSONATE CYTIDYLYLTRANSFERASE"/>
    <property type="match status" value="1"/>
</dbReference>
<dbReference type="Pfam" id="PF04413">
    <property type="entry name" value="Glycos_transf_N"/>
    <property type="match status" value="1"/>
</dbReference>
<proteinExistence type="inferred from homology"/>
<gene>
    <name type="primary">waaA</name>
    <name type="synonym">kdtA</name>
    <name type="ordered locus">RT0048</name>
</gene>
<reference key="1">
    <citation type="journal article" date="2004" name="J. Bacteriol.">
        <title>Complete genome sequence of Rickettsia typhi and comparison with sequences of other Rickettsiae.</title>
        <authorList>
            <person name="McLeod M.P."/>
            <person name="Qin X."/>
            <person name="Karpathy S.E."/>
            <person name="Gioia J."/>
            <person name="Highlander S.K."/>
            <person name="Fox G.E."/>
            <person name="McNeill T.Z."/>
            <person name="Jiang H."/>
            <person name="Muzny D."/>
            <person name="Jacob L.S."/>
            <person name="Hawes A.C."/>
            <person name="Sodergren E."/>
            <person name="Gill R."/>
            <person name="Hume J."/>
            <person name="Morgan M."/>
            <person name="Fan G."/>
            <person name="Amin A.G."/>
            <person name="Gibbs R.A."/>
            <person name="Hong C."/>
            <person name="Yu X.-J."/>
            <person name="Walker D.H."/>
            <person name="Weinstock G.M."/>
        </authorList>
    </citation>
    <scope>NUCLEOTIDE SEQUENCE [LARGE SCALE GENOMIC DNA]</scope>
    <source>
        <strain>ATCC VR-144 / Wilmington</strain>
    </source>
</reference>
<sequence>MMLLYYILSFILLPVYFIIIFIRLLIGKEDIRRIQERFAIGKQRQNSLLDLQMSVNQEGFKVDTEHKATSYVYIHRNASLMYKLSLERSYAQSLVWIHAASVGEVMTSLTLIHNICKLAPNVRFLITSWTNTSAKILSTKLPKIATHQFLPIDNVIFTRKFLSNWKPDLGIFIESELWPCIINEGAKHCKLLLVNARISNKSFKTWLKRKKFFQLIIKNFSKIIVQSECDLQKFNALGISDAMNLGNIKFANEKLLVNQEKLSKLSLHLDNRRVVVFASTHPEDEEVILPIINNLKEQFVDCYIILIPRHPERVKSILNNCKCHNLLATAKSQNDLPVLSDDIYIVDRFGEMGLFFSVATISFIGGSFKQGGHNILEAAYFSNCIIFGPDMSKNTDIAKGILQNNAAIQIKNGEDLLNTLKSLLNANNALKLKAYRENALKFVEHNQKILDEYLHVIKPFLP</sequence>
<name>KDTA_RICTY</name>
<comment type="function">
    <text evidence="1">Involved in lipopolysaccharide (LPS) biosynthesis. Catalyzes the transfer of 3-deoxy-D-manno-octulosonate (Kdo) residue(s) from CMP-Kdo to lipid IV(A), the tetraacyldisaccharide-1,4'-bisphosphate precursor of lipid A.</text>
</comment>
<comment type="catalytic activity">
    <reaction>
        <text>lipid IVA (E. coli) + CMP-3-deoxy-beta-D-manno-octulosonate = alpha-Kdo-(2-&gt;6)-lipid IVA (E. coli) + CMP + H(+)</text>
        <dbReference type="Rhea" id="RHEA:28066"/>
        <dbReference type="ChEBI" id="CHEBI:15378"/>
        <dbReference type="ChEBI" id="CHEBI:58603"/>
        <dbReference type="ChEBI" id="CHEBI:60364"/>
        <dbReference type="ChEBI" id="CHEBI:60377"/>
        <dbReference type="ChEBI" id="CHEBI:85987"/>
        <dbReference type="EC" id="2.4.99.12"/>
    </reaction>
</comment>
<comment type="pathway">
    <text>Bacterial outer membrane biogenesis; LPS core biosynthesis.</text>
</comment>
<comment type="subcellular location">
    <subcellularLocation>
        <location evidence="1">Cell inner membrane</location>
        <topology evidence="1">Single-pass membrane protein</topology>
        <orientation evidence="1">Cytoplasmic side</orientation>
    </subcellularLocation>
</comment>
<comment type="similarity">
    <text evidence="3">Belongs to the glycosyltransferase group 1 family.</text>
</comment>
<organism>
    <name type="scientific">Rickettsia typhi (strain ATCC VR-144 / Wilmington)</name>
    <dbReference type="NCBI Taxonomy" id="257363"/>
    <lineage>
        <taxon>Bacteria</taxon>
        <taxon>Pseudomonadati</taxon>
        <taxon>Pseudomonadota</taxon>
        <taxon>Alphaproteobacteria</taxon>
        <taxon>Rickettsiales</taxon>
        <taxon>Rickettsiaceae</taxon>
        <taxon>Rickettsieae</taxon>
        <taxon>Rickettsia</taxon>
        <taxon>typhus group</taxon>
    </lineage>
</organism>
<accession>Q68XV7</accession>
<protein>
    <recommendedName>
        <fullName>3-deoxy-D-manno-octulosonic acid transferase</fullName>
        <shortName>Kdo transferase</shortName>
        <ecNumber>2.4.99.12</ecNumber>
    </recommendedName>
    <alternativeName>
        <fullName>Lipid IV(A) 3-deoxy-D-manno-octulosonic acid transferase</fullName>
    </alternativeName>
</protein>